<dbReference type="EC" id="2.4.2.18" evidence="1"/>
<dbReference type="EMBL" id="BA000028">
    <property type="protein sequence ID" value="BAC12481.1"/>
    <property type="molecule type" value="Genomic_DNA"/>
</dbReference>
<dbReference type="RefSeq" id="WP_011064928.1">
    <property type="nucleotide sequence ID" value="NC_004193.1"/>
</dbReference>
<dbReference type="SMR" id="Q8ESU1"/>
<dbReference type="STRING" id="221109.gene:10732729"/>
<dbReference type="KEGG" id="oih:OB0525"/>
<dbReference type="eggNOG" id="COG0547">
    <property type="taxonomic scope" value="Bacteria"/>
</dbReference>
<dbReference type="HOGENOM" id="CLU_034315_2_1_9"/>
<dbReference type="OrthoDB" id="9806430at2"/>
<dbReference type="PhylomeDB" id="Q8ESU1"/>
<dbReference type="UniPathway" id="UPA00035">
    <property type="reaction ID" value="UER00041"/>
</dbReference>
<dbReference type="Proteomes" id="UP000000822">
    <property type="component" value="Chromosome"/>
</dbReference>
<dbReference type="GO" id="GO:0005829">
    <property type="term" value="C:cytosol"/>
    <property type="evidence" value="ECO:0007669"/>
    <property type="project" value="TreeGrafter"/>
</dbReference>
<dbReference type="GO" id="GO:0004048">
    <property type="term" value="F:anthranilate phosphoribosyltransferase activity"/>
    <property type="evidence" value="ECO:0007669"/>
    <property type="project" value="UniProtKB-UniRule"/>
</dbReference>
<dbReference type="GO" id="GO:0000287">
    <property type="term" value="F:magnesium ion binding"/>
    <property type="evidence" value="ECO:0007669"/>
    <property type="project" value="UniProtKB-UniRule"/>
</dbReference>
<dbReference type="GO" id="GO:0000162">
    <property type="term" value="P:L-tryptophan biosynthetic process"/>
    <property type="evidence" value="ECO:0007669"/>
    <property type="project" value="UniProtKB-UniRule"/>
</dbReference>
<dbReference type="FunFam" id="3.40.1030.10:FF:000002">
    <property type="entry name" value="Anthranilate phosphoribosyltransferase"/>
    <property type="match status" value="1"/>
</dbReference>
<dbReference type="Gene3D" id="3.40.1030.10">
    <property type="entry name" value="Nucleoside phosphorylase/phosphoribosyltransferase catalytic domain"/>
    <property type="match status" value="1"/>
</dbReference>
<dbReference type="Gene3D" id="1.20.970.10">
    <property type="entry name" value="Transferase, Pyrimidine Nucleoside Phosphorylase, Chain C"/>
    <property type="match status" value="1"/>
</dbReference>
<dbReference type="HAMAP" id="MF_00211">
    <property type="entry name" value="TrpD"/>
    <property type="match status" value="1"/>
</dbReference>
<dbReference type="InterPro" id="IPR005940">
    <property type="entry name" value="Anthranilate_Pribosyl_Tfrase"/>
</dbReference>
<dbReference type="InterPro" id="IPR000312">
    <property type="entry name" value="Glycosyl_Trfase_fam3"/>
</dbReference>
<dbReference type="InterPro" id="IPR017459">
    <property type="entry name" value="Glycosyl_Trfase_fam3_N_dom"/>
</dbReference>
<dbReference type="InterPro" id="IPR036320">
    <property type="entry name" value="Glycosyl_Trfase_fam3_N_dom_sf"/>
</dbReference>
<dbReference type="InterPro" id="IPR035902">
    <property type="entry name" value="Nuc_phospho_transferase"/>
</dbReference>
<dbReference type="NCBIfam" id="TIGR01245">
    <property type="entry name" value="trpD"/>
    <property type="match status" value="1"/>
</dbReference>
<dbReference type="PANTHER" id="PTHR43285">
    <property type="entry name" value="ANTHRANILATE PHOSPHORIBOSYLTRANSFERASE"/>
    <property type="match status" value="1"/>
</dbReference>
<dbReference type="PANTHER" id="PTHR43285:SF2">
    <property type="entry name" value="ANTHRANILATE PHOSPHORIBOSYLTRANSFERASE"/>
    <property type="match status" value="1"/>
</dbReference>
<dbReference type="Pfam" id="PF02885">
    <property type="entry name" value="Glycos_trans_3N"/>
    <property type="match status" value="1"/>
</dbReference>
<dbReference type="Pfam" id="PF00591">
    <property type="entry name" value="Glycos_transf_3"/>
    <property type="match status" value="1"/>
</dbReference>
<dbReference type="SUPFAM" id="SSF52418">
    <property type="entry name" value="Nucleoside phosphorylase/phosphoribosyltransferase catalytic domain"/>
    <property type="match status" value="1"/>
</dbReference>
<dbReference type="SUPFAM" id="SSF47648">
    <property type="entry name" value="Nucleoside phosphorylase/phosphoribosyltransferase N-terminal domain"/>
    <property type="match status" value="1"/>
</dbReference>
<feature type="chain" id="PRO_0000154466" description="Anthranilate phosphoribosyltransferase">
    <location>
        <begin position="1"/>
        <end position="340"/>
    </location>
</feature>
<feature type="binding site" evidence="1">
    <location>
        <position position="79"/>
    </location>
    <ligand>
        <name>5-phospho-alpha-D-ribose 1-diphosphate</name>
        <dbReference type="ChEBI" id="CHEBI:58017"/>
    </ligand>
</feature>
<feature type="binding site" evidence="1">
    <location>
        <position position="79"/>
    </location>
    <ligand>
        <name>anthranilate</name>
        <dbReference type="ChEBI" id="CHEBI:16567"/>
        <label>1</label>
    </ligand>
</feature>
<feature type="binding site" evidence="1">
    <location>
        <begin position="82"/>
        <end position="83"/>
    </location>
    <ligand>
        <name>5-phospho-alpha-D-ribose 1-diphosphate</name>
        <dbReference type="ChEBI" id="CHEBI:58017"/>
    </ligand>
</feature>
<feature type="binding site" evidence="1">
    <location>
        <position position="87"/>
    </location>
    <ligand>
        <name>5-phospho-alpha-D-ribose 1-diphosphate</name>
        <dbReference type="ChEBI" id="CHEBI:58017"/>
    </ligand>
</feature>
<feature type="binding site" evidence="1">
    <location>
        <begin position="89"/>
        <end position="92"/>
    </location>
    <ligand>
        <name>5-phospho-alpha-D-ribose 1-diphosphate</name>
        <dbReference type="ChEBI" id="CHEBI:58017"/>
    </ligand>
</feature>
<feature type="binding site" evidence="1">
    <location>
        <position position="91"/>
    </location>
    <ligand>
        <name>Mg(2+)</name>
        <dbReference type="ChEBI" id="CHEBI:18420"/>
        <label>1</label>
    </ligand>
</feature>
<feature type="binding site" evidence="1">
    <location>
        <begin position="107"/>
        <end position="115"/>
    </location>
    <ligand>
        <name>5-phospho-alpha-D-ribose 1-diphosphate</name>
        <dbReference type="ChEBI" id="CHEBI:58017"/>
    </ligand>
</feature>
<feature type="binding site" evidence="1">
    <location>
        <position position="110"/>
    </location>
    <ligand>
        <name>anthranilate</name>
        <dbReference type="ChEBI" id="CHEBI:16567"/>
        <label>1</label>
    </ligand>
</feature>
<feature type="binding site" evidence="1">
    <location>
        <position position="119"/>
    </location>
    <ligand>
        <name>5-phospho-alpha-D-ribose 1-diphosphate</name>
        <dbReference type="ChEBI" id="CHEBI:58017"/>
    </ligand>
</feature>
<feature type="binding site" evidence="1">
    <location>
        <position position="165"/>
    </location>
    <ligand>
        <name>anthranilate</name>
        <dbReference type="ChEBI" id="CHEBI:16567"/>
        <label>2</label>
    </ligand>
</feature>
<feature type="binding site" evidence="1">
    <location>
        <position position="224"/>
    </location>
    <ligand>
        <name>Mg(2+)</name>
        <dbReference type="ChEBI" id="CHEBI:18420"/>
        <label>2</label>
    </ligand>
</feature>
<feature type="binding site" evidence="1">
    <location>
        <position position="225"/>
    </location>
    <ligand>
        <name>Mg(2+)</name>
        <dbReference type="ChEBI" id="CHEBI:18420"/>
        <label>1</label>
    </ligand>
</feature>
<feature type="binding site" evidence="1">
    <location>
        <position position="225"/>
    </location>
    <ligand>
        <name>Mg(2+)</name>
        <dbReference type="ChEBI" id="CHEBI:18420"/>
        <label>2</label>
    </ligand>
</feature>
<keyword id="KW-0028">Amino-acid biosynthesis</keyword>
<keyword id="KW-0057">Aromatic amino acid biosynthesis</keyword>
<keyword id="KW-0328">Glycosyltransferase</keyword>
<keyword id="KW-0460">Magnesium</keyword>
<keyword id="KW-0479">Metal-binding</keyword>
<keyword id="KW-1185">Reference proteome</keyword>
<keyword id="KW-0808">Transferase</keyword>
<keyword id="KW-0822">Tryptophan biosynthesis</keyword>
<gene>
    <name evidence="1" type="primary">trpD</name>
    <name type="ordered locus">OB0525</name>
</gene>
<name>TRPD_OCEIH</name>
<reference key="1">
    <citation type="journal article" date="2002" name="Nucleic Acids Res.">
        <title>Genome sequence of Oceanobacillus iheyensis isolated from the Iheya Ridge and its unexpected adaptive capabilities to extreme environments.</title>
        <authorList>
            <person name="Takami H."/>
            <person name="Takaki Y."/>
            <person name="Uchiyama I."/>
        </authorList>
    </citation>
    <scope>NUCLEOTIDE SEQUENCE [LARGE SCALE GENOMIC DNA]</scope>
    <source>
        <strain>DSM 14371 / CIP 107618 / JCM 11309 / KCTC 3954 / HTE831</strain>
    </source>
</reference>
<protein>
    <recommendedName>
        <fullName evidence="1">Anthranilate phosphoribosyltransferase</fullName>
        <ecNumber evidence="1">2.4.2.18</ecNumber>
    </recommendedName>
</protein>
<organism>
    <name type="scientific">Oceanobacillus iheyensis (strain DSM 14371 / CIP 107618 / JCM 11309 / KCTC 3954 / HTE831)</name>
    <dbReference type="NCBI Taxonomy" id="221109"/>
    <lineage>
        <taxon>Bacteria</taxon>
        <taxon>Bacillati</taxon>
        <taxon>Bacillota</taxon>
        <taxon>Bacilli</taxon>
        <taxon>Bacillales</taxon>
        <taxon>Bacillaceae</taxon>
        <taxon>Oceanobacillus</taxon>
    </lineage>
</organism>
<accession>Q8ESU1</accession>
<proteinExistence type="inferred from homology"/>
<comment type="function">
    <text evidence="1">Catalyzes the transfer of the phosphoribosyl group of 5-phosphorylribose-1-pyrophosphate (PRPP) to anthranilate to yield N-(5'-phosphoribosyl)-anthranilate (PRA).</text>
</comment>
<comment type="catalytic activity">
    <reaction evidence="1">
        <text>N-(5-phospho-beta-D-ribosyl)anthranilate + diphosphate = 5-phospho-alpha-D-ribose 1-diphosphate + anthranilate</text>
        <dbReference type="Rhea" id="RHEA:11768"/>
        <dbReference type="ChEBI" id="CHEBI:16567"/>
        <dbReference type="ChEBI" id="CHEBI:18277"/>
        <dbReference type="ChEBI" id="CHEBI:33019"/>
        <dbReference type="ChEBI" id="CHEBI:58017"/>
        <dbReference type="EC" id="2.4.2.18"/>
    </reaction>
</comment>
<comment type="cofactor">
    <cofactor evidence="1">
        <name>Mg(2+)</name>
        <dbReference type="ChEBI" id="CHEBI:18420"/>
    </cofactor>
    <text evidence="1">Binds 2 magnesium ions per monomer.</text>
</comment>
<comment type="pathway">
    <text evidence="1">Amino-acid biosynthesis; L-tryptophan biosynthesis; L-tryptophan from chorismate: step 2/5.</text>
</comment>
<comment type="subunit">
    <text evidence="1">Homodimer.</text>
</comment>
<comment type="similarity">
    <text evidence="1">Belongs to the anthranilate phosphoribosyltransferase family.</text>
</comment>
<evidence type="ECO:0000255" key="1">
    <source>
        <dbReference type="HAMAP-Rule" id="MF_00211"/>
    </source>
</evidence>
<sequence>MKHSLHKIIERQDLSTEEIKEVFKHCFSQEVSDSELAAILISLKMKGETAEEVAGLSQVIQEHSPFLLNFHQPVMDNCGTGGDRSNSFNISTCSAFVLAGAGVTVAKHGNRSVSSQTGSADVLEKLGVSLAFTKEQVNEMLDKNQIAFLFAQHVHPTLKQVGKVRKDLRIPTIFNFIGPLTNPVHLDSQYIGVYDPEALQMVAKAAQLLGRERAIVIHGAGGLDEASLQGENKYILVENDRLEEKTIHPEEVGLSVYPNDEIQGGNATENANILLSVLKGEDSAYLDTVLFNAGIALFASKKADSIYDGVELARESITSGSALSKLNNLITFSKKVSEVV</sequence>